<organismHost>
    <name type="scientific">Homo sapiens</name>
    <name type="common">Human</name>
    <dbReference type="NCBI Taxonomy" id="9606"/>
</organismHost>
<organismHost>
    <name type="scientific">Ixodida</name>
    <name type="common">ticks</name>
    <dbReference type="NCBI Taxonomy" id="6935"/>
</organismHost>
<accession>P29838</accession>
<dbReference type="EMBL" id="M73835">
    <property type="protein sequence ID" value="AAA02740.1"/>
    <property type="molecule type" value="Unassigned_RNA"/>
</dbReference>
<dbReference type="PIR" id="A41704">
    <property type="entry name" value="A41704"/>
</dbReference>
<dbReference type="PDB" id="1Z66">
    <property type="method" value="NMR"/>
    <property type="chains" value="A=580-675"/>
</dbReference>
<dbReference type="PDBsum" id="1Z66"/>
<dbReference type="BMRB" id="P29838"/>
<dbReference type="SMR" id="P29838"/>
<dbReference type="GO" id="GO:0005576">
    <property type="term" value="C:extracellular region"/>
    <property type="evidence" value="ECO:0007669"/>
    <property type="project" value="UniProtKB-SubCell"/>
</dbReference>
<dbReference type="GO" id="GO:0044167">
    <property type="term" value="C:host cell endoplasmic reticulum membrane"/>
    <property type="evidence" value="ECO:0007669"/>
    <property type="project" value="UniProtKB-SubCell"/>
</dbReference>
<dbReference type="GO" id="GO:0016020">
    <property type="term" value="C:membrane"/>
    <property type="evidence" value="ECO:0007669"/>
    <property type="project" value="UniProtKB-KW"/>
</dbReference>
<dbReference type="GO" id="GO:0019028">
    <property type="term" value="C:viral capsid"/>
    <property type="evidence" value="ECO:0007669"/>
    <property type="project" value="UniProtKB-KW"/>
</dbReference>
<dbReference type="GO" id="GO:0019031">
    <property type="term" value="C:viral envelope"/>
    <property type="evidence" value="ECO:0007669"/>
    <property type="project" value="UniProtKB-KW"/>
</dbReference>
<dbReference type="GO" id="GO:0055036">
    <property type="term" value="C:virion membrane"/>
    <property type="evidence" value="ECO:0007669"/>
    <property type="project" value="UniProtKB-SubCell"/>
</dbReference>
<dbReference type="GO" id="GO:0046983">
    <property type="term" value="F:protein dimerization activity"/>
    <property type="evidence" value="ECO:0007669"/>
    <property type="project" value="InterPro"/>
</dbReference>
<dbReference type="GO" id="GO:0005198">
    <property type="term" value="F:structural molecule activity"/>
    <property type="evidence" value="ECO:0007669"/>
    <property type="project" value="InterPro"/>
</dbReference>
<dbReference type="GO" id="GO:0075512">
    <property type="term" value="P:clathrin-dependent endocytosis of virus by host cell"/>
    <property type="evidence" value="ECO:0007669"/>
    <property type="project" value="UniProtKB-KW"/>
</dbReference>
<dbReference type="GO" id="GO:0039654">
    <property type="term" value="P:fusion of virus membrane with host endosome membrane"/>
    <property type="evidence" value="ECO:0007669"/>
    <property type="project" value="UniProtKB-KW"/>
</dbReference>
<dbReference type="GO" id="GO:0019062">
    <property type="term" value="P:virion attachment to host cell"/>
    <property type="evidence" value="ECO:0007669"/>
    <property type="project" value="UniProtKB-KW"/>
</dbReference>
<dbReference type="CDD" id="cd12149">
    <property type="entry name" value="Flavi_E_C"/>
    <property type="match status" value="1"/>
</dbReference>
<dbReference type="CDD" id="cd17038">
    <property type="entry name" value="Flavi_M"/>
    <property type="match status" value="1"/>
</dbReference>
<dbReference type="Gene3D" id="1.20.1280.260">
    <property type="match status" value="1"/>
</dbReference>
<dbReference type="Gene3D" id="2.60.40.350">
    <property type="match status" value="1"/>
</dbReference>
<dbReference type="Gene3D" id="1.10.8.970">
    <property type="entry name" value="Flavivirus envelope glycoprotein M-like"/>
    <property type="match status" value="1"/>
</dbReference>
<dbReference type="Gene3D" id="2.60.260.50">
    <property type="entry name" value="Flavivirus polyprotein propeptide domain"/>
    <property type="match status" value="1"/>
</dbReference>
<dbReference type="Gene3D" id="2.60.98.10">
    <property type="entry name" value="Tick-borne Encephalitis virus Glycoprotein, domain 1"/>
    <property type="match status" value="1"/>
</dbReference>
<dbReference type="Gene3D" id="3.30.67.10">
    <property type="entry name" value="Viral Envelope Glycoprotein, domain 2"/>
    <property type="match status" value="1"/>
</dbReference>
<dbReference type="Gene3D" id="3.30.387.10">
    <property type="entry name" value="Viral Envelope Glycoprotein, domain 3"/>
    <property type="match status" value="1"/>
</dbReference>
<dbReference type="InterPro" id="IPR000069">
    <property type="entry name" value="Env_glycoprot_M_flavivir"/>
</dbReference>
<dbReference type="InterPro" id="IPR038302">
    <property type="entry name" value="Env_glycoprot_M_sf_flavivir"/>
</dbReference>
<dbReference type="InterPro" id="IPR013755">
    <property type="entry name" value="Flav_gly_cen_dom_subdom1"/>
</dbReference>
<dbReference type="InterPro" id="IPR001122">
    <property type="entry name" value="Flavi_capsidC"/>
</dbReference>
<dbReference type="InterPro" id="IPR027287">
    <property type="entry name" value="Flavi_E_Ig-like"/>
</dbReference>
<dbReference type="InterPro" id="IPR026470">
    <property type="entry name" value="Flavi_E_Stem/Anchor_dom"/>
</dbReference>
<dbReference type="InterPro" id="IPR038345">
    <property type="entry name" value="Flavi_E_Stem/Anchor_dom_sf"/>
</dbReference>
<dbReference type="InterPro" id="IPR011998">
    <property type="entry name" value="Flavi_Glycoprot_E_cen/dimer"/>
</dbReference>
<dbReference type="InterPro" id="IPR002535">
    <property type="entry name" value="Flavi_propep"/>
</dbReference>
<dbReference type="InterPro" id="IPR038688">
    <property type="entry name" value="Flavi_propep_sf"/>
</dbReference>
<dbReference type="InterPro" id="IPR000336">
    <property type="entry name" value="Flavivir/Alphavir_Ig-like_sf"/>
</dbReference>
<dbReference type="InterPro" id="IPR036253">
    <property type="entry name" value="Glycoprot_cen/dimer_sf"/>
</dbReference>
<dbReference type="InterPro" id="IPR038055">
    <property type="entry name" value="Glycoprot_E_dimer_dom"/>
</dbReference>
<dbReference type="InterPro" id="IPR013756">
    <property type="entry name" value="GlyE_cen_dom_subdom2"/>
</dbReference>
<dbReference type="InterPro" id="IPR014756">
    <property type="entry name" value="Ig_E-set"/>
</dbReference>
<dbReference type="NCBIfam" id="TIGR04240">
    <property type="entry name" value="flavi_E_stem"/>
    <property type="match status" value="1"/>
</dbReference>
<dbReference type="Pfam" id="PF01003">
    <property type="entry name" value="Flavi_capsid"/>
    <property type="match status" value="1"/>
</dbReference>
<dbReference type="Pfam" id="PF21659">
    <property type="entry name" value="Flavi_E_stem"/>
    <property type="match status" value="1"/>
</dbReference>
<dbReference type="Pfam" id="PF02832">
    <property type="entry name" value="Flavi_glycop_C"/>
    <property type="match status" value="1"/>
</dbReference>
<dbReference type="Pfam" id="PF00869">
    <property type="entry name" value="Flavi_glycoprot"/>
    <property type="match status" value="1"/>
</dbReference>
<dbReference type="Pfam" id="PF01004">
    <property type="entry name" value="Flavi_M"/>
    <property type="match status" value="1"/>
</dbReference>
<dbReference type="Pfam" id="PF01570">
    <property type="entry name" value="Flavi_propep"/>
    <property type="match status" value="1"/>
</dbReference>
<dbReference type="SUPFAM" id="SSF81296">
    <property type="entry name" value="E set domains"/>
    <property type="match status" value="1"/>
</dbReference>
<dbReference type="SUPFAM" id="SSF56983">
    <property type="entry name" value="Viral glycoprotein, central and dimerisation domains"/>
    <property type="match status" value="1"/>
</dbReference>
<proteinExistence type="evidence at protein level"/>
<feature type="chain" id="PRO_0000405133" description="Genome polyprotein">
    <location>
        <begin position="1"/>
        <end position="776" status="greater than"/>
    </location>
</feature>
<feature type="chain" id="PRO_0000037699" description="Capsid protein C" evidence="1">
    <location>
        <begin position="1"/>
        <end position="96"/>
    </location>
</feature>
<feature type="propeptide" id="PRO_0000405134" description="ER anchor for the protein C, removed in mature form by serine protease NS3" evidence="1">
    <location>
        <begin position="97"/>
        <end position="117"/>
    </location>
</feature>
<feature type="chain" id="PRO_0000405135" description="Protein prM" evidence="1">
    <location>
        <begin position="118"/>
        <end position="280"/>
    </location>
</feature>
<feature type="chain" id="PRO_0000037700" description="Peptide pr" evidence="1">
    <location>
        <begin position="118"/>
        <end position="205"/>
    </location>
</feature>
<feature type="chain" id="PRO_0000037701" description="Small envelope protein M" evidence="1">
    <location>
        <begin position="206"/>
        <end position="280"/>
    </location>
</feature>
<feature type="chain" id="PRO_0000037702" description="Envelope protein E" evidence="1">
    <location>
        <begin position="281"/>
        <end position="776"/>
    </location>
</feature>
<feature type="topological domain" description="Cytoplasmic" evidence="2">
    <location>
        <begin position="1"/>
        <end position="98"/>
    </location>
</feature>
<feature type="transmembrane region" description="Helical" evidence="2">
    <location>
        <begin position="99"/>
        <end position="117"/>
    </location>
</feature>
<feature type="topological domain" description="Extracellular" evidence="2">
    <location>
        <begin position="118"/>
        <end position="242"/>
    </location>
</feature>
<feature type="transmembrane region" description="Helical" evidence="2">
    <location>
        <begin position="243"/>
        <end position="260"/>
    </location>
</feature>
<feature type="topological domain" description="Cytoplasmic" evidence="2">
    <location>
        <position position="261"/>
    </location>
</feature>
<feature type="transmembrane region" description="Helical" evidence="2">
    <location>
        <begin position="262"/>
        <end position="280"/>
    </location>
</feature>
<feature type="topological domain" description="Extracellular" evidence="2">
    <location>
        <begin position="281"/>
        <end position="727"/>
    </location>
</feature>
<feature type="intramembrane region" description="Helical" evidence="2">
    <location>
        <begin position="728"/>
        <end position="748"/>
    </location>
</feature>
<feature type="topological domain" description="Extracellular" evidence="2">
    <location>
        <begin position="749"/>
        <end position="755"/>
    </location>
</feature>
<feature type="intramembrane region" description="Helical" evidence="2">
    <location>
        <begin position="756"/>
        <end position="776"/>
    </location>
</feature>
<feature type="region of interest" description="Disordered" evidence="3">
    <location>
        <begin position="1"/>
        <end position="27"/>
    </location>
</feature>
<feature type="region of interest" description="Hydrophobic; homodimerization of capsid protein C" evidence="1">
    <location>
        <begin position="33"/>
        <end position="68"/>
    </location>
</feature>
<feature type="compositionally biased region" description="Basic residues" evidence="3">
    <location>
        <begin position="17"/>
        <end position="27"/>
    </location>
</feature>
<feature type="site" description="Cleavage; by viral protease NS3" evidence="2">
    <location>
        <begin position="96"/>
        <end position="97"/>
    </location>
</feature>
<feature type="site" description="Cleavage; by host signal peptidase" evidence="1">
    <location>
        <begin position="117"/>
        <end position="118"/>
    </location>
</feature>
<feature type="site" description="Cleavage; by host furin" evidence="2">
    <location>
        <begin position="205"/>
        <end position="206"/>
    </location>
</feature>
<feature type="site" description="Cleavage; by host signal peptidase" evidence="2">
    <location>
        <begin position="280"/>
        <end position="281"/>
    </location>
</feature>
<feature type="glycosylation site" description="N-linked (GlcNAc...) asparagine; by host" evidence="2">
    <location>
        <position position="144"/>
    </location>
</feature>
<feature type="glycosylation site" description="N-linked (GlcNAc...) asparagine; by host" evidence="2">
    <location>
        <position position="434"/>
    </location>
</feature>
<feature type="disulfide bond" evidence="1">
    <location>
        <begin position="283"/>
        <end position="310"/>
    </location>
</feature>
<feature type="disulfide bond" evidence="1">
    <location>
        <begin position="340"/>
        <end position="396"/>
    </location>
</feature>
<feature type="disulfide bond" evidence="1">
    <location>
        <begin position="354"/>
        <end position="385"/>
    </location>
</feature>
<feature type="disulfide bond" evidence="1">
    <location>
        <begin position="372"/>
        <end position="401"/>
    </location>
</feature>
<feature type="disulfide bond" evidence="1">
    <location>
        <begin position="466"/>
        <end position="570"/>
    </location>
</feature>
<feature type="disulfide bond" evidence="1">
    <location>
        <begin position="587"/>
        <end position="618"/>
    </location>
</feature>
<feature type="non-terminal residue">
    <location>
        <position position="776"/>
    </location>
</feature>
<keyword id="KW-0002">3D-structure</keyword>
<keyword id="KW-0167">Capsid protein</keyword>
<keyword id="KW-1165">Clathrin-mediated endocytosis of virus by host</keyword>
<keyword id="KW-0165">Cleavage on pair of basic residues</keyword>
<keyword id="KW-1015">Disulfide bond</keyword>
<keyword id="KW-1170">Fusion of virus membrane with host endosomal membrane</keyword>
<keyword id="KW-1168">Fusion of virus membrane with host membrane</keyword>
<keyword id="KW-0325">Glycoprotein</keyword>
<keyword id="KW-1038">Host endoplasmic reticulum</keyword>
<keyword id="KW-1043">Host membrane</keyword>
<keyword id="KW-0945">Host-virus interaction</keyword>
<keyword id="KW-0472">Membrane</keyword>
<keyword id="KW-0964">Secreted</keyword>
<keyword id="KW-0812">Transmembrane</keyword>
<keyword id="KW-1133">Transmembrane helix</keyword>
<keyword id="KW-1161">Viral attachment to host cell</keyword>
<keyword id="KW-0261">Viral envelope protein</keyword>
<keyword id="KW-1162">Viral penetration into host cytoplasm</keyword>
<keyword id="KW-0946">Virion</keyword>
<keyword id="KW-1164">Virus endocytosis by host</keyword>
<keyword id="KW-1160">Virus entry into host cell</keyword>
<sequence length="776" mass="84537">MAGKAVLKGKGGGPPRRASKVAPKKTRQLRVQMPNGLVLMRMLGVLWHALTGTARSPVLKAFWKVVPLKQATLALRKIKRTVSTLMVGLHRRGSRRTTIDWMTPLLITVMLGMCLTATVRRERDGSMVIRAEGRDAATQVRVENGTCVILATDMGSWCDDSLAYECVTIDQGEEPVDVDCFCRGVEKVTLEYGRCGRREGSRSRRSVLIPSHAQRDLTGRGHQWLEGEAVKAHLTRVEGWVWKNKLFTLSLVMVAWLMVDGLLPRILIVVVALALVPAYASRCTHLENRDFVTGVQGTTRLTLVLELGGCVTVTADGKPSLDVWLDSIYQESPAQTREYCLHAKLTGTKVAARCPTMGPATLPEEHQSGTVCKRDQSDRGWGNHCGLFGKGSIVTCVKFTCEDKKKATGHVYDVNKITYTIKVEPHTGEFVAANETHSGRKSASFTVSSEKTILTLGDYGDVSLLCRVASGVDLAQTVVLALDKTHEHLPTAWQVHRDWFNDLALPWKHDGAEAWNEAGRLVEFGTPHAVKMDVFNLGDQTGVLLKSLAGVPVASIEGTKYHLKSGHVTCEVGLEKLKMKGLTYTVCDKTKFTWKRAPTDSGHDTVVMEVGFSGTRPCRIPVRAVAHGVPEVNVAMLITPNPTMENNGGGFIEMQLPPGDNIIYVGDLNHQWFQKGSSIGRVLQKTRKGIERLTVLGEHAWDFGSVGGVMTSIGRAMHTVLGGAFNTLLGGVGFLPKILLGVAMAWLGLNMRNPTLSMGFLLSGGLVLAMTLGVGA</sequence>
<protein>
    <recommendedName>
        <fullName>Genome polyprotein</fullName>
    </recommendedName>
    <component>
        <recommendedName>
            <fullName>Capsid protein C</fullName>
        </recommendedName>
        <alternativeName>
            <fullName>Core protein</fullName>
        </alternativeName>
    </component>
    <component>
        <recommendedName>
            <fullName>Protein prM</fullName>
        </recommendedName>
    </component>
    <component>
        <recommendedName>
            <fullName>Peptide pr</fullName>
        </recommendedName>
    </component>
    <component>
        <recommendedName>
            <fullName>Small envelope protein M</fullName>
        </recommendedName>
        <alternativeName>
            <fullName>Matrix protein</fullName>
        </alternativeName>
    </component>
    <component>
        <recommendedName>
            <fullName>Envelope protein E</fullName>
        </recommendedName>
    </component>
</protein>
<name>POLG_LANVY</name>
<reference key="1">
    <citation type="journal article" date="1991" name="Virology">
        <title>Sequence of the genes encoding the structural proteins of the low-virulence tick-borne flaviviruses Langat TP21 and Yelantsev.</title>
        <authorList>
            <person name="Mandl C.W."/>
            <person name="Iacono-Connors L.C."/>
            <person name="Wallner G."/>
            <person name="Holzmann H."/>
            <person name="Kunz C."/>
            <person name="Heinz F.X."/>
        </authorList>
    </citation>
    <scope>NUCLEOTIDE SEQUENCE [GENOMIC RNA]</scope>
</reference>
<reference key="2">
    <citation type="journal article" date="2006" name="Protein Sci.">
        <title>NMR solution structure and backbone dynamics of domain III of the E protein of tick-borne Langat flavivirus suggests a potential site for molecular recognition.</title>
        <authorList>
            <person name="Mukherjee M."/>
            <person name="Dutta K."/>
            <person name="White M.A."/>
            <person name="Cowburn D."/>
            <person name="Fox R.O."/>
        </authorList>
    </citation>
    <scope>STRUCTURE BY NMR OF 580-675</scope>
</reference>
<organism>
    <name type="scientific">Langat virus (strain Yelantsev)</name>
    <dbReference type="NCBI Taxonomy" id="31639"/>
    <lineage>
        <taxon>Viruses</taxon>
        <taxon>Riboviria</taxon>
        <taxon>Orthornavirae</taxon>
        <taxon>Kitrinoviricota</taxon>
        <taxon>Flasuviricetes</taxon>
        <taxon>Amarillovirales</taxon>
        <taxon>Flaviviridae</taxon>
        <taxon>Orthoflavivirus</taxon>
        <taxon>Orthoflavivirus langatense</taxon>
    </lineage>
</organism>
<comment type="function">
    <text evidence="1">Capsid protein C self-assembles to form an icosahedral capsid about 30 nm in diameter. The capsid encapsulates the genomic RNA (By similarity).</text>
</comment>
<comment type="function">
    <text evidence="1">prM acts as a chaperone for envelope protein E during intracellular virion assembly by masking and inactivating envelope protein E fusion peptide. prM is matured in the last step of virion assembly, presumably to avoid catastrophic activation of the viral fusion peptide induced by the acidic pH of the trans-Golgi network. After cleavage by host furin, the pr peptide is released in the extracellular medium and small envelope protein M and envelope protein E homodimers are dissociated (By similarity).</text>
</comment>
<comment type="function">
    <text evidence="1">Envelope protein E binding to host cell surface receptor is followed by virus internalization through clathrin-mediated endocytosis. Envelope protein E is subsequently involved in membrane fusion between virion and host late endosomes. Synthesized as a homodimer with prM which acts as a chaperone for envelope protein E. After cleavage of prM, envelope protein E dissociate from small envelope protein M and homodimerizes (By similarity).</text>
</comment>
<comment type="subcellular location">
    <molecule>Capsid protein C</molecule>
    <subcellularLocation>
        <location evidence="4">Virion</location>
    </subcellularLocation>
</comment>
<comment type="subcellular location">
    <molecule>Peptide pr</molecule>
    <subcellularLocation>
        <location evidence="1">Secreted</location>
    </subcellularLocation>
</comment>
<comment type="subcellular location">
    <molecule>Small envelope protein M</molecule>
    <subcellularLocation>
        <location evidence="1">Virion membrane</location>
        <topology evidence="1">Multi-pass membrane protein</topology>
    </subcellularLocation>
    <subcellularLocation>
        <location evidence="1">Host endoplasmic reticulum membrane</location>
        <topology evidence="1">Multi-pass membrane protein</topology>
    </subcellularLocation>
</comment>
<comment type="subcellular location">
    <molecule>Envelope protein E</molecule>
    <subcellularLocation>
        <location evidence="1">Virion membrane</location>
        <topology evidence="1">Multi-pass membrane protein</topology>
    </subcellularLocation>
    <subcellularLocation>
        <location evidence="1">Host endoplasmic reticulum membrane</location>
        <topology evidence="1">Multi-pass membrane protein</topology>
    </subcellularLocation>
</comment>
<comment type="PTM">
    <text evidence="1">Specific enzymatic cleavages in vivo yield mature proteins Peptide 2K acts as a signal sequence and is removed from the N-terminus of NS4B by the host signal peptidase in the ER lumen. Signal cleavage at the 2K-4B site requires a prior NS3 protease-mediated cleavage at the 4A-2K site (By similarity).</text>
</comment>
<evidence type="ECO:0000250" key="1"/>
<evidence type="ECO:0000255" key="2"/>
<evidence type="ECO:0000256" key="3">
    <source>
        <dbReference type="SAM" id="MobiDB-lite"/>
    </source>
</evidence>
<evidence type="ECO:0000305" key="4"/>